<protein>
    <recommendedName>
        <fullName>Uncharacterized protein YdcA</fullName>
    </recommendedName>
</protein>
<sequence length="57" mass="5860">MKKLALILFMGTLVSFYADAGRKPCSGSKGGISHCTAGGKFVCNDGSISASKKTCTN</sequence>
<accession>P0ACW5</accession>
<accession>P23864</accession>
<accession>P77469</accession>
<reference key="1">
    <citation type="journal article" date="2002" name="Nucleic Acids Res.">
        <title>Genome sequence of Shigella flexneri 2a: insights into pathogenicity through comparison with genomes of Escherichia coli K12 and O157.</title>
        <authorList>
            <person name="Jin Q."/>
            <person name="Yuan Z."/>
            <person name="Xu J."/>
            <person name="Wang Y."/>
            <person name="Shen Y."/>
            <person name="Lu W."/>
            <person name="Wang J."/>
            <person name="Liu H."/>
            <person name="Yang J."/>
            <person name="Yang F."/>
            <person name="Zhang X."/>
            <person name="Zhang J."/>
            <person name="Yang G."/>
            <person name="Wu H."/>
            <person name="Qu D."/>
            <person name="Dong J."/>
            <person name="Sun L."/>
            <person name="Xue Y."/>
            <person name="Zhao A."/>
            <person name="Gao Y."/>
            <person name="Zhu J."/>
            <person name="Kan B."/>
            <person name="Ding K."/>
            <person name="Chen S."/>
            <person name="Cheng H."/>
            <person name="Yao Z."/>
            <person name="He B."/>
            <person name="Chen R."/>
            <person name="Ma D."/>
            <person name="Qiang B."/>
            <person name="Wen Y."/>
            <person name="Hou Y."/>
            <person name="Yu J."/>
        </authorList>
    </citation>
    <scope>NUCLEOTIDE SEQUENCE [LARGE SCALE GENOMIC DNA]</scope>
    <source>
        <strain>301 / Serotype 2a</strain>
    </source>
</reference>
<reference key="2">
    <citation type="journal article" date="2003" name="Infect. Immun.">
        <title>Complete genome sequence and comparative genomics of Shigella flexneri serotype 2a strain 2457T.</title>
        <authorList>
            <person name="Wei J."/>
            <person name="Goldberg M.B."/>
            <person name="Burland V."/>
            <person name="Venkatesan M.M."/>
            <person name="Deng W."/>
            <person name="Fournier G."/>
            <person name="Mayhew G.F."/>
            <person name="Plunkett G. III"/>
            <person name="Rose D.J."/>
            <person name="Darling A."/>
            <person name="Mau B."/>
            <person name="Perna N.T."/>
            <person name="Payne S.M."/>
            <person name="Runyen-Janecky L.J."/>
            <person name="Zhou S."/>
            <person name="Schwartz D.C."/>
            <person name="Blattner F.R."/>
        </authorList>
    </citation>
    <scope>NUCLEOTIDE SEQUENCE [LARGE SCALE GENOMIC DNA]</scope>
    <source>
        <strain>ATCC 700930 / 2457T / Serotype 2a</strain>
    </source>
</reference>
<feature type="signal peptide" evidence="1">
    <location>
        <begin position="1"/>
        <end position="20"/>
    </location>
</feature>
<feature type="chain" id="PRO_0000042856" description="Uncharacterized protein YdcA">
    <location>
        <begin position="21"/>
        <end position="57"/>
    </location>
</feature>
<evidence type="ECO:0000255" key="1"/>
<organism>
    <name type="scientific">Shigella flexneri</name>
    <dbReference type="NCBI Taxonomy" id="623"/>
    <lineage>
        <taxon>Bacteria</taxon>
        <taxon>Pseudomonadati</taxon>
        <taxon>Pseudomonadota</taxon>
        <taxon>Gammaproteobacteria</taxon>
        <taxon>Enterobacterales</taxon>
        <taxon>Enterobacteriaceae</taxon>
        <taxon>Shigella</taxon>
    </lineage>
</organism>
<name>YDCA_SHIFL</name>
<keyword id="KW-1185">Reference proteome</keyword>
<keyword id="KW-0732">Signal</keyword>
<dbReference type="EMBL" id="AE005674">
    <property type="protein sequence ID" value="AAN43362.1"/>
    <property type="molecule type" value="Genomic_DNA"/>
</dbReference>
<dbReference type="EMBL" id="AE014073">
    <property type="protein sequence ID" value="AAP16867.1"/>
    <property type="molecule type" value="Genomic_DNA"/>
</dbReference>
<dbReference type="RefSeq" id="NP_707655.1">
    <property type="nucleotide sequence ID" value="NC_004337.2"/>
</dbReference>
<dbReference type="RefSeq" id="WP_000731833.1">
    <property type="nucleotide sequence ID" value="NZ_WPGW01000197.1"/>
</dbReference>
<dbReference type="SMR" id="P0ACW5"/>
<dbReference type="PaxDb" id="198214-SF1793"/>
<dbReference type="GeneID" id="1024949"/>
<dbReference type="KEGG" id="sfl:SF1793"/>
<dbReference type="KEGG" id="sfx:S1479"/>
<dbReference type="PATRIC" id="fig|198214.7.peg.2127"/>
<dbReference type="HOGENOM" id="CLU_210702_0_0_6"/>
<dbReference type="Proteomes" id="UP000001006">
    <property type="component" value="Chromosome"/>
</dbReference>
<dbReference type="Proteomes" id="UP000002673">
    <property type="component" value="Chromosome"/>
</dbReference>
<dbReference type="NCBIfam" id="NF007462">
    <property type="entry name" value="PRK10040.1-1"/>
    <property type="match status" value="1"/>
</dbReference>
<gene>
    <name type="primary">ydcA</name>
    <name type="ordered locus">SF1793</name>
    <name type="ordered locus">S1479</name>
</gene>
<proteinExistence type="inferred from homology"/>